<accession>B8E6E4</accession>
<protein>
    <recommendedName>
        <fullName evidence="1">ATP-dependent protease subunit HslV</fullName>
        <ecNumber evidence="1">3.4.25.2</ecNumber>
    </recommendedName>
</protein>
<name>HSLV_SHEB2</name>
<keyword id="KW-0021">Allosteric enzyme</keyword>
<keyword id="KW-0963">Cytoplasm</keyword>
<keyword id="KW-0378">Hydrolase</keyword>
<keyword id="KW-0479">Metal-binding</keyword>
<keyword id="KW-0645">Protease</keyword>
<keyword id="KW-0915">Sodium</keyword>
<keyword id="KW-0888">Threonine protease</keyword>
<gene>
    <name evidence="1" type="primary">hslV</name>
    <name type="ordered locus">Sbal223_0473</name>
</gene>
<sequence>MTTIVSVRRNNQVVIAGDGQVSLGNTVMKGNAKKVRRLYHNKVLAGFAGGTADAFTLFERFEAKLEMHQGHLLRSAVELAKDWRTDRMLRKLEALLVVADAETSLIITGNGDVVQPEHDLVAIGSGGNYAQAAALALLQNTELSALEIAEKSLTIAADICVFTNQFKTIEELNY</sequence>
<feature type="chain" id="PRO_1000125417" description="ATP-dependent protease subunit HslV">
    <location>
        <begin position="1"/>
        <end position="174"/>
    </location>
</feature>
<feature type="active site" evidence="1">
    <location>
        <position position="2"/>
    </location>
</feature>
<feature type="binding site" evidence="1">
    <location>
        <position position="157"/>
    </location>
    <ligand>
        <name>Na(+)</name>
        <dbReference type="ChEBI" id="CHEBI:29101"/>
    </ligand>
</feature>
<feature type="binding site" evidence="1">
    <location>
        <position position="160"/>
    </location>
    <ligand>
        <name>Na(+)</name>
        <dbReference type="ChEBI" id="CHEBI:29101"/>
    </ligand>
</feature>
<feature type="binding site" evidence="1">
    <location>
        <position position="163"/>
    </location>
    <ligand>
        <name>Na(+)</name>
        <dbReference type="ChEBI" id="CHEBI:29101"/>
    </ligand>
</feature>
<dbReference type="EC" id="3.4.25.2" evidence="1"/>
<dbReference type="EMBL" id="CP001252">
    <property type="protein sequence ID" value="ACK45007.1"/>
    <property type="molecule type" value="Genomic_DNA"/>
</dbReference>
<dbReference type="RefSeq" id="WP_006083300.1">
    <property type="nucleotide sequence ID" value="NC_011663.1"/>
</dbReference>
<dbReference type="SMR" id="B8E6E4"/>
<dbReference type="MEROPS" id="T01.006"/>
<dbReference type="GeneID" id="11770798"/>
<dbReference type="KEGG" id="sbp:Sbal223_0473"/>
<dbReference type="HOGENOM" id="CLU_093872_1_0_6"/>
<dbReference type="Proteomes" id="UP000002507">
    <property type="component" value="Chromosome"/>
</dbReference>
<dbReference type="GO" id="GO:0009376">
    <property type="term" value="C:HslUV protease complex"/>
    <property type="evidence" value="ECO:0007669"/>
    <property type="project" value="UniProtKB-UniRule"/>
</dbReference>
<dbReference type="GO" id="GO:0005839">
    <property type="term" value="C:proteasome core complex"/>
    <property type="evidence" value="ECO:0007669"/>
    <property type="project" value="InterPro"/>
</dbReference>
<dbReference type="GO" id="GO:0046872">
    <property type="term" value="F:metal ion binding"/>
    <property type="evidence" value="ECO:0007669"/>
    <property type="project" value="UniProtKB-KW"/>
</dbReference>
<dbReference type="GO" id="GO:0004298">
    <property type="term" value="F:threonine-type endopeptidase activity"/>
    <property type="evidence" value="ECO:0007669"/>
    <property type="project" value="UniProtKB-KW"/>
</dbReference>
<dbReference type="GO" id="GO:0051603">
    <property type="term" value="P:proteolysis involved in protein catabolic process"/>
    <property type="evidence" value="ECO:0007669"/>
    <property type="project" value="InterPro"/>
</dbReference>
<dbReference type="CDD" id="cd01913">
    <property type="entry name" value="protease_HslV"/>
    <property type="match status" value="1"/>
</dbReference>
<dbReference type="FunFam" id="3.60.20.10:FF:000002">
    <property type="entry name" value="ATP-dependent protease subunit HslV"/>
    <property type="match status" value="1"/>
</dbReference>
<dbReference type="Gene3D" id="3.60.20.10">
    <property type="entry name" value="Glutamine Phosphoribosylpyrophosphate, subunit 1, domain 1"/>
    <property type="match status" value="1"/>
</dbReference>
<dbReference type="HAMAP" id="MF_00248">
    <property type="entry name" value="HslV"/>
    <property type="match status" value="1"/>
</dbReference>
<dbReference type="InterPro" id="IPR022281">
    <property type="entry name" value="ATP-dep_Prtase_HsIV_su"/>
</dbReference>
<dbReference type="InterPro" id="IPR029055">
    <property type="entry name" value="Ntn_hydrolases_N"/>
</dbReference>
<dbReference type="InterPro" id="IPR001353">
    <property type="entry name" value="Proteasome_sua/b"/>
</dbReference>
<dbReference type="InterPro" id="IPR023333">
    <property type="entry name" value="Proteasome_suB-type"/>
</dbReference>
<dbReference type="NCBIfam" id="TIGR03692">
    <property type="entry name" value="ATP_dep_HslV"/>
    <property type="match status" value="1"/>
</dbReference>
<dbReference type="NCBIfam" id="NF003964">
    <property type="entry name" value="PRK05456.1"/>
    <property type="match status" value="1"/>
</dbReference>
<dbReference type="PANTHER" id="PTHR32194:SF0">
    <property type="entry name" value="ATP-DEPENDENT PROTEASE SUBUNIT HSLV"/>
    <property type="match status" value="1"/>
</dbReference>
<dbReference type="PANTHER" id="PTHR32194">
    <property type="entry name" value="METALLOPROTEASE TLDD"/>
    <property type="match status" value="1"/>
</dbReference>
<dbReference type="Pfam" id="PF00227">
    <property type="entry name" value="Proteasome"/>
    <property type="match status" value="1"/>
</dbReference>
<dbReference type="PIRSF" id="PIRSF039093">
    <property type="entry name" value="HslV"/>
    <property type="match status" value="1"/>
</dbReference>
<dbReference type="SUPFAM" id="SSF56235">
    <property type="entry name" value="N-terminal nucleophile aminohydrolases (Ntn hydrolases)"/>
    <property type="match status" value="1"/>
</dbReference>
<dbReference type="PROSITE" id="PS51476">
    <property type="entry name" value="PROTEASOME_BETA_2"/>
    <property type="match status" value="1"/>
</dbReference>
<proteinExistence type="inferred from homology"/>
<reference key="1">
    <citation type="submission" date="2008-12" db="EMBL/GenBank/DDBJ databases">
        <title>Complete sequence of chromosome of Shewanella baltica OS223.</title>
        <authorList>
            <consortium name="US DOE Joint Genome Institute"/>
            <person name="Lucas S."/>
            <person name="Copeland A."/>
            <person name="Lapidus A."/>
            <person name="Glavina del Rio T."/>
            <person name="Dalin E."/>
            <person name="Tice H."/>
            <person name="Bruce D."/>
            <person name="Goodwin L."/>
            <person name="Pitluck S."/>
            <person name="Chertkov O."/>
            <person name="Meincke L."/>
            <person name="Brettin T."/>
            <person name="Detter J.C."/>
            <person name="Han C."/>
            <person name="Kuske C.R."/>
            <person name="Larimer F."/>
            <person name="Land M."/>
            <person name="Hauser L."/>
            <person name="Kyrpides N."/>
            <person name="Ovchinnikova G."/>
            <person name="Brettar I."/>
            <person name="Rodrigues J."/>
            <person name="Konstantinidis K."/>
            <person name="Tiedje J."/>
        </authorList>
    </citation>
    <scope>NUCLEOTIDE SEQUENCE [LARGE SCALE GENOMIC DNA]</scope>
    <source>
        <strain>OS223</strain>
    </source>
</reference>
<evidence type="ECO:0000255" key="1">
    <source>
        <dbReference type="HAMAP-Rule" id="MF_00248"/>
    </source>
</evidence>
<organism>
    <name type="scientific">Shewanella baltica (strain OS223)</name>
    <dbReference type="NCBI Taxonomy" id="407976"/>
    <lineage>
        <taxon>Bacteria</taxon>
        <taxon>Pseudomonadati</taxon>
        <taxon>Pseudomonadota</taxon>
        <taxon>Gammaproteobacteria</taxon>
        <taxon>Alteromonadales</taxon>
        <taxon>Shewanellaceae</taxon>
        <taxon>Shewanella</taxon>
    </lineage>
</organism>
<comment type="function">
    <text evidence="1">Protease subunit of a proteasome-like degradation complex believed to be a general protein degrading machinery.</text>
</comment>
<comment type="catalytic activity">
    <reaction evidence="1">
        <text>ATP-dependent cleavage of peptide bonds with broad specificity.</text>
        <dbReference type="EC" id="3.4.25.2"/>
    </reaction>
</comment>
<comment type="activity regulation">
    <text evidence="1">Allosterically activated by HslU binding.</text>
</comment>
<comment type="subunit">
    <text evidence="1">A double ring-shaped homohexamer of HslV is capped on each side by a ring-shaped HslU homohexamer. The assembly of the HslU/HslV complex is dependent on binding of ATP.</text>
</comment>
<comment type="subcellular location">
    <subcellularLocation>
        <location evidence="1">Cytoplasm</location>
    </subcellularLocation>
</comment>
<comment type="similarity">
    <text evidence="1">Belongs to the peptidase T1B family. HslV subfamily.</text>
</comment>